<proteinExistence type="inferred from homology"/>
<comment type="function">
    <text evidence="1">Hydrolyzes ribosome-free peptidyl-tRNAs (with 1 or more amino acids incorporated), which drop off the ribosome during protein synthesis, or as a result of ribosome stalling.</text>
</comment>
<comment type="function">
    <text evidence="1">Catalyzes the release of premature peptidyl moieties from peptidyl-tRNA molecules trapped in stalled 50S ribosomal subunits, and thus maintains levels of free tRNAs and 50S ribosomes.</text>
</comment>
<comment type="catalytic activity">
    <reaction evidence="1">
        <text>an N-acyl-L-alpha-aminoacyl-tRNA + H2O = an N-acyl-L-amino acid + a tRNA + H(+)</text>
        <dbReference type="Rhea" id="RHEA:54448"/>
        <dbReference type="Rhea" id="RHEA-COMP:10123"/>
        <dbReference type="Rhea" id="RHEA-COMP:13883"/>
        <dbReference type="ChEBI" id="CHEBI:15377"/>
        <dbReference type="ChEBI" id="CHEBI:15378"/>
        <dbReference type="ChEBI" id="CHEBI:59874"/>
        <dbReference type="ChEBI" id="CHEBI:78442"/>
        <dbReference type="ChEBI" id="CHEBI:138191"/>
        <dbReference type="EC" id="3.1.1.29"/>
    </reaction>
</comment>
<comment type="subunit">
    <text evidence="1">Monomer.</text>
</comment>
<comment type="subcellular location">
    <subcellularLocation>
        <location evidence="1">Cytoplasm</location>
    </subcellularLocation>
</comment>
<comment type="similarity">
    <text evidence="1">Belongs to the PTH family.</text>
</comment>
<organism>
    <name type="scientific">Anaeromyxobacter dehalogenans (strain 2CP-C)</name>
    <dbReference type="NCBI Taxonomy" id="290397"/>
    <lineage>
        <taxon>Bacteria</taxon>
        <taxon>Pseudomonadati</taxon>
        <taxon>Myxococcota</taxon>
        <taxon>Myxococcia</taxon>
        <taxon>Myxococcales</taxon>
        <taxon>Cystobacterineae</taxon>
        <taxon>Anaeromyxobacteraceae</taxon>
        <taxon>Anaeromyxobacter</taxon>
    </lineage>
</organism>
<sequence>MKLVVGLGNPGEEYARTRHNVGFVVADRLAQLAGASFTAKKFAAELAEARLGPERVWILKPQTYMNHSGEAVGAALRFWKLGLDDLVVVHDDLELEPFRVQLKVGGGHGGHNGVKSVNAHVGSPEYARVRVGVGRPPPRMDPADYVLGKFAKGEDAELDLCVEQAVEATRLAVELGAAKAMNQVNRRSRAAE</sequence>
<gene>
    <name evidence="1" type="primary">pth</name>
    <name type="ordered locus">Adeh_0119</name>
</gene>
<dbReference type="EC" id="3.1.1.29" evidence="1"/>
<dbReference type="EMBL" id="CP000251">
    <property type="protein sequence ID" value="ABC79896.1"/>
    <property type="molecule type" value="Genomic_DNA"/>
</dbReference>
<dbReference type="RefSeq" id="WP_011419179.1">
    <property type="nucleotide sequence ID" value="NC_007760.1"/>
</dbReference>
<dbReference type="SMR" id="Q2IM62"/>
<dbReference type="STRING" id="290397.Adeh_0119"/>
<dbReference type="KEGG" id="ade:Adeh_0119"/>
<dbReference type="eggNOG" id="COG0193">
    <property type="taxonomic scope" value="Bacteria"/>
</dbReference>
<dbReference type="HOGENOM" id="CLU_062456_2_2_7"/>
<dbReference type="OrthoDB" id="9800507at2"/>
<dbReference type="Proteomes" id="UP000001935">
    <property type="component" value="Chromosome"/>
</dbReference>
<dbReference type="GO" id="GO:0005737">
    <property type="term" value="C:cytoplasm"/>
    <property type="evidence" value="ECO:0007669"/>
    <property type="project" value="UniProtKB-SubCell"/>
</dbReference>
<dbReference type="GO" id="GO:0004045">
    <property type="term" value="F:peptidyl-tRNA hydrolase activity"/>
    <property type="evidence" value="ECO:0007669"/>
    <property type="project" value="UniProtKB-UniRule"/>
</dbReference>
<dbReference type="GO" id="GO:0000049">
    <property type="term" value="F:tRNA binding"/>
    <property type="evidence" value="ECO:0007669"/>
    <property type="project" value="UniProtKB-UniRule"/>
</dbReference>
<dbReference type="GO" id="GO:0006515">
    <property type="term" value="P:protein quality control for misfolded or incompletely synthesized proteins"/>
    <property type="evidence" value="ECO:0007669"/>
    <property type="project" value="UniProtKB-UniRule"/>
</dbReference>
<dbReference type="GO" id="GO:0072344">
    <property type="term" value="P:rescue of stalled ribosome"/>
    <property type="evidence" value="ECO:0007669"/>
    <property type="project" value="UniProtKB-UniRule"/>
</dbReference>
<dbReference type="CDD" id="cd00462">
    <property type="entry name" value="PTH"/>
    <property type="match status" value="1"/>
</dbReference>
<dbReference type="FunFam" id="3.40.50.1470:FF:000001">
    <property type="entry name" value="Peptidyl-tRNA hydrolase"/>
    <property type="match status" value="1"/>
</dbReference>
<dbReference type="Gene3D" id="3.40.50.1470">
    <property type="entry name" value="Peptidyl-tRNA hydrolase"/>
    <property type="match status" value="1"/>
</dbReference>
<dbReference type="HAMAP" id="MF_00083">
    <property type="entry name" value="Pept_tRNA_hydro_bact"/>
    <property type="match status" value="1"/>
</dbReference>
<dbReference type="InterPro" id="IPR001328">
    <property type="entry name" value="Pept_tRNA_hydro"/>
</dbReference>
<dbReference type="InterPro" id="IPR018171">
    <property type="entry name" value="Pept_tRNA_hydro_CS"/>
</dbReference>
<dbReference type="InterPro" id="IPR036416">
    <property type="entry name" value="Pept_tRNA_hydro_sf"/>
</dbReference>
<dbReference type="NCBIfam" id="TIGR00447">
    <property type="entry name" value="pth"/>
    <property type="match status" value="1"/>
</dbReference>
<dbReference type="PANTHER" id="PTHR17224">
    <property type="entry name" value="PEPTIDYL-TRNA HYDROLASE"/>
    <property type="match status" value="1"/>
</dbReference>
<dbReference type="PANTHER" id="PTHR17224:SF1">
    <property type="entry name" value="PEPTIDYL-TRNA HYDROLASE"/>
    <property type="match status" value="1"/>
</dbReference>
<dbReference type="Pfam" id="PF01195">
    <property type="entry name" value="Pept_tRNA_hydro"/>
    <property type="match status" value="1"/>
</dbReference>
<dbReference type="SUPFAM" id="SSF53178">
    <property type="entry name" value="Peptidyl-tRNA hydrolase-like"/>
    <property type="match status" value="1"/>
</dbReference>
<dbReference type="PROSITE" id="PS01195">
    <property type="entry name" value="PEPT_TRNA_HYDROL_1"/>
    <property type="match status" value="1"/>
</dbReference>
<dbReference type="PROSITE" id="PS01196">
    <property type="entry name" value="PEPT_TRNA_HYDROL_2"/>
    <property type="match status" value="1"/>
</dbReference>
<evidence type="ECO:0000255" key="1">
    <source>
        <dbReference type="HAMAP-Rule" id="MF_00083"/>
    </source>
</evidence>
<keyword id="KW-0963">Cytoplasm</keyword>
<keyword id="KW-0378">Hydrolase</keyword>
<keyword id="KW-1185">Reference proteome</keyword>
<keyword id="KW-0694">RNA-binding</keyword>
<keyword id="KW-0820">tRNA-binding</keyword>
<name>PTH_ANADE</name>
<protein>
    <recommendedName>
        <fullName evidence="1">Peptidyl-tRNA hydrolase</fullName>
        <shortName evidence="1">Pth</shortName>
        <ecNumber evidence="1">3.1.1.29</ecNumber>
    </recommendedName>
</protein>
<feature type="chain" id="PRO_0000264003" description="Peptidyl-tRNA hydrolase">
    <location>
        <begin position="1"/>
        <end position="192"/>
    </location>
</feature>
<feature type="active site" description="Proton acceptor" evidence="1">
    <location>
        <position position="19"/>
    </location>
</feature>
<feature type="binding site" evidence="1">
    <location>
        <position position="14"/>
    </location>
    <ligand>
        <name>tRNA</name>
        <dbReference type="ChEBI" id="CHEBI:17843"/>
    </ligand>
</feature>
<feature type="binding site" evidence="1">
    <location>
        <position position="64"/>
    </location>
    <ligand>
        <name>tRNA</name>
        <dbReference type="ChEBI" id="CHEBI:17843"/>
    </ligand>
</feature>
<feature type="binding site" evidence="1">
    <location>
        <position position="66"/>
    </location>
    <ligand>
        <name>tRNA</name>
        <dbReference type="ChEBI" id="CHEBI:17843"/>
    </ligand>
</feature>
<feature type="binding site" evidence="1">
    <location>
        <position position="112"/>
    </location>
    <ligand>
        <name>tRNA</name>
        <dbReference type="ChEBI" id="CHEBI:17843"/>
    </ligand>
</feature>
<feature type="site" description="Discriminates between blocked and unblocked aminoacyl-tRNA" evidence="1">
    <location>
        <position position="9"/>
    </location>
</feature>
<feature type="site" description="Stabilizes the basic form of H active site to accept a proton" evidence="1">
    <location>
        <position position="91"/>
    </location>
</feature>
<reference key="1">
    <citation type="submission" date="2006-01" db="EMBL/GenBank/DDBJ databases">
        <title>Complete sequence of Anaeromyxobacter dehalogenans 2CP-C.</title>
        <authorList>
            <person name="Copeland A."/>
            <person name="Lucas S."/>
            <person name="Lapidus A."/>
            <person name="Barry K."/>
            <person name="Detter J.C."/>
            <person name="Glavina T."/>
            <person name="Hammon N."/>
            <person name="Israni S."/>
            <person name="Pitluck S."/>
            <person name="Brettin T."/>
            <person name="Bruce D."/>
            <person name="Han C."/>
            <person name="Tapia R."/>
            <person name="Gilna P."/>
            <person name="Kiss H."/>
            <person name="Schmutz J."/>
            <person name="Larimer F."/>
            <person name="Land M."/>
            <person name="Kyrpides N."/>
            <person name="Anderson I."/>
            <person name="Sanford R.A."/>
            <person name="Ritalahti K.M."/>
            <person name="Thomas H.S."/>
            <person name="Kirby J.R."/>
            <person name="Zhulin I.B."/>
            <person name="Loeffler F.E."/>
            <person name="Richardson P."/>
        </authorList>
    </citation>
    <scope>NUCLEOTIDE SEQUENCE [LARGE SCALE GENOMIC DNA]</scope>
    <source>
        <strain>2CP-C</strain>
    </source>
</reference>
<accession>Q2IM62</accession>